<comment type="function">
    <text evidence="1">Essential for recycling GMP and indirectly, cGMP.</text>
</comment>
<comment type="catalytic activity">
    <reaction evidence="1">
        <text>GMP + ATP = GDP + ADP</text>
        <dbReference type="Rhea" id="RHEA:20780"/>
        <dbReference type="ChEBI" id="CHEBI:30616"/>
        <dbReference type="ChEBI" id="CHEBI:58115"/>
        <dbReference type="ChEBI" id="CHEBI:58189"/>
        <dbReference type="ChEBI" id="CHEBI:456216"/>
        <dbReference type="EC" id="2.7.4.8"/>
    </reaction>
</comment>
<comment type="subcellular location">
    <subcellularLocation>
        <location evidence="1">Cytoplasm</location>
    </subcellularLocation>
</comment>
<comment type="similarity">
    <text evidence="1">Belongs to the guanylate kinase family.</text>
</comment>
<accession>Q3AC14</accession>
<feature type="chain" id="PRO_0000266301" description="Guanylate kinase">
    <location>
        <begin position="1"/>
        <end position="204"/>
    </location>
</feature>
<feature type="domain" description="Guanylate kinase-like" evidence="1">
    <location>
        <begin position="4"/>
        <end position="182"/>
    </location>
</feature>
<feature type="binding site" evidence="1">
    <location>
        <begin position="11"/>
        <end position="18"/>
    </location>
    <ligand>
        <name>ATP</name>
        <dbReference type="ChEBI" id="CHEBI:30616"/>
    </ligand>
</feature>
<evidence type="ECO:0000255" key="1">
    <source>
        <dbReference type="HAMAP-Rule" id="MF_00328"/>
    </source>
</evidence>
<protein>
    <recommendedName>
        <fullName evidence="1">Guanylate kinase</fullName>
        <ecNumber evidence="1">2.7.4.8</ecNumber>
    </recommendedName>
    <alternativeName>
        <fullName evidence="1">GMP kinase</fullName>
    </alternativeName>
</protein>
<keyword id="KW-0067">ATP-binding</keyword>
<keyword id="KW-0963">Cytoplasm</keyword>
<keyword id="KW-0418">Kinase</keyword>
<keyword id="KW-0547">Nucleotide-binding</keyword>
<keyword id="KW-1185">Reference proteome</keyword>
<keyword id="KW-0808">Transferase</keyword>
<dbReference type="EC" id="2.7.4.8" evidence="1"/>
<dbReference type="EMBL" id="CP000141">
    <property type="protein sequence ID" value="ABB15039.1"/>
    <property type="molecule type" value="Genomic_DNA"/>
</dbReference>
<dbReference type="RefSeq" id="WP_011344395.1">
    <property type="nucleotide sequence ID" value="NC_007503.1"/>
</dbReference>
<dbReference type="SMR" id="Q3AC14"/>
<dbReference type="FunCoup" id="Q3AC14">
    <property type="interactions" value="371"/>
</dbReference>
<dbReference type="STRING" id="246194.CHY_1488"/>
<dbReference type="KEGG" id="chy:CHY_1488"/>
<dbReference type="eggNOG" id="COG0194">
    <property type="taxonomic scope" value="Bacteria"/>
</dbReference>
<dbReference type="HOGENOM" id="CLU_001715_1_2_9"/>
<dbReference type="InParanoid" id="Q3AC14"/>
<dbReference type="OrthoDB" id="9808150at2"/>
<dbReference type="Proteomes" id="UP000002706">
    <property type="component" value="Chromosome"/>
</dbReference>
<dbReference type="GO" id="GO:0005829">
    <property type="term" value="C:cytosol"/>
    <property type="evidence" value="ECO:0007669"/>
    <property type="project" value="TreeGrafter"/>
</dbReference>
<dbReference type="GO" id="GO:0005524">
    <property type="term" value="F:ATP binding"/>
    <property type="evidence" value="ECO:0007669"/>
    <property type="project" value="UniProtKB-UniRule"/>
</dbReference>
<dbReference type="GO" id="GO:0004385">
    <property type="term" value="F:guanylate kinase activity"/>
    <property type="evidence" value="ECO:0007669"/>
    <property type="project" value="UniProtKB-UniRule"/>
</dbReference>
<dbReference type="CDD" id="cd00071">
    <property type="entry name" value="GMPK"/>
    <property type="match status" value="1"/>
</dbReference>
<dbReference type="FunFam" id="3.30.63.10:FF:000002">
    <property type="entry name" value="Guanylate kinase 1"/>
    <property type="match status" value="1"/>
</dbReference>
<dbReference type="Gene3D" id="3.30.63.10">
    <property type="entry name" value="Guanylate Kinase phosphate binding domain"/>
    <property type="match status" value="1"/>
</dbReference>
<dbReference type="Gene3D" id="3.40.50.300">
    <property type="entry name" value="P-loop containing nucleotide triphosphate hydrolases"/>
    <property type="match status" value="1"/>
</dbReference>
<dbReference type="HAMAP" id="MF_00328">
    <property type="entry name" value="Guanylate_kinase"/>
    <property type="match status" value="1"/>
</dbReference>
<dbReference type="InterPro" id="IPR008145">
    <property type="entry name" value="GK/Ca_channel_bsu"/>
</dbReference>
<dbReference type="InterPro" id="IPR008144">
    <property type="entry name" value="Guanylate_kin-like_dom"/>
</dbReference>
<dbReference type="InterPro" id="IPR017665">
    <property type="entry name" value="Guanylate_kinase"/>
</dbReference>
<dbReference type="InterPro" id="IPR020590">
    <property type="entry name" value="Guanylate_kinase_CS"/>
</dbReference>
<dbReference type="InterPro" id="IPR027417">
    <property type="entry name" value="P-loop_NTPase"/>
</dbReference>
<dbReference type="NCBIfam" id="TIGR03263">
    <property type="entry name" value="guanyl_kin"/>
    <property type="match status" value="1"/>
</dbReference>
<dbReference type="PANTHER" id="PTHR23117:SF13">
    <property type="entry name" value="GUANYLATE KINASE"/>
    <property type="match status" value="1"/>
</dbReference>
<dbReference type="PANTHER" id="PTHR23117">
    <property type="entry name" value="GUANYLATE KINASE-RELATED"/>
    <property type="match status" value="1"/>
</dbReference>
<dbReference type="Pfam" id="PF00625">
    <property type="entry name" value="Guanylate_kin"/>
    <property type="match status" value="1"/>
</dbReference>
<dbReference type="SMART" id="SM00072">
    <property type="entry name" value="GuKc"/>
    <property type="match status" value="1"/>
</dbReference>
<dbReference type="SUPFAM" id="SSF52540">
    <property type="entry name" value="P-loop containing nucleoside triphosphate hydrolases"/>
    <property type="match status" value="1"/>
</dbReference>
<dbReference type="PROSITE" id="PS00856">
    <property type="entry name" value="GUANYLATE_KINASE_1"/>
    <property type="match status" value="1"/>
</dbReference>
<dbReference type="PROSITE" id="PS50052">
    <property type="entry name" value="GUANYLATE_KINASE_2"/>
    <property type="match status" value="1"/>
</dbReference>
<name>KGUA_CARHZ</name>
<gene>
    <name evidence="1" type="primary">gmk</name>
    <name type="ordered locus">CHY_1488</name>
</gene>
<reference key="1">
    <citation type="journal article" date="2005" name="PLoS Genet.">
        <title>Life in hot carbon monoxide: the complete genome sequence of Carboxydothermus hydrogenoformans Z-2901.</title>
        <authorList>
            <person name="Wu M."/>
            <person name="Ren Q."/>
            <person name="Durkin A.S."/>
            <person name="Daugherty S.C."/>
            <person name="Brinkac L.M."/>
            <person name="Dodson R.J."/>
            <person name="Madupu R."/>
            <person name="Sullivan S.A."/>
            <person name="Kolonay J.F."/>
            <person name="Nelson W.C."/>
            <person name="Tallon L.J."/>
            <person name="Jones K.M."/>
            <person name="Ulrich L.E."/>
            <person name="Gonzalez J.M."/>
            <person name="Zhulin I.B."/>
            <person name="Robb F.T."/>
            <person name="Eisen J.A."/>
        </authorList>
    </citation>
    <scope>NUCLEOTIDE SEQUENCE [LARGE SCALE GENOMIC DNA]</scope>
    <source>
        <strain>ATCC BAA-161 / DSM 6008 / Z-2901</strain>
    </source>
</reference>
<sequence length="204" mass="23494">MHKGMLVVVSGPSGAGKGTICQEIRKRNPNLFYSISATTREKRVGEIDGVHYYFIDRQQFEKMIANDEFLEWADVYGNYYGTPKKPVFEALARGQDVILEIDIKGARQVKKTYPEGVFVFILPPSISILEERLRKRGTDKEEIIVKRMQMAWEEIANCDWYDYLILNDDLETAVNDLEAVLTAEKLKPKRVNYRVLLEGGVLER</sequence>
<organism>
    <name type="scientific">Carboxydothermus hydrogenoformans (strain ATCC BAA-161 / DSM 6008 / Z-2901)</name>
    <dbReference type="NCBI Taxonomy" id="246194"/>
    <lineage>
        <taxon>Bacteria</taxon>
        <taxon>Bacillati</taxon>
        <taxon>Bacillota</taxon>
        <taxon>Clostridia</taxon>
        <taxon>Thermoanaerobacterales</taxon>
        <taxon>Thermoanaerobacteraceae</taxon>
        <taxon>Carboxydothermus</taxon>
    </lineage>
</organism>
<proteinExistence type="inferred from homology"/>